<dbReference type="EMBL" id="M13636">
    <property type="protein sequence ID" value="AAA30057.1"/>
    <property type="molecule type" value="mRNA"/>
</dbReference>
<dbReference type="PIR" id="C25381">
    <property type="entry name" value="HSURA1"/>
</dbReference>
<dbReference type="SMR" id="P09590"/>
<dbReference type="STRING" id="7668.P09590"/>
<dbReference type="eggNOG" id="KOG1756">
    <property type="taxonomic scope" value="Eukaryota"/>
</dbReference>
<dbReference type="HOGENOM" id="CLU_062828_3_3_1"/>
<dbReference type="InParanoid" id="P09590"/>
<dbReference type="Proteomes" id="UP000007110">
    <property type="component" value="Unassembled WGS sequence"/>
</dbReference>
<dbReference type="GO" id="GO:0000786">
    <property type="term" value="C:nucleosome"/>
    <property type="evidence" value="ECO:0000318"/>
    <property type="project" value="GO_Central"/>
</dbReference>
<dbReference type="GO" id="GO:0005634">
    <property type="term" value="C:nucleus"/>
    <property type="evidence" value="ECO:0000318"/>
    <property type="project" value="GO_Central"/>
</dbReference>
<dbReference type="GO" id="GO:0003677">
    <property type="term" value="F:DNA binding"/>
    <property type="evidence" value="ECO:0007669"/>
    <property type="project" value="UniProtKB-KW"/>
</dbReference>
<dbReference type="GO" id="GO:0046982">
    <property type="term" value="F:protein heterodimerization activity"/>
    <property type="evidence" value="ECO:0007669"/>
    <property type="project" value="InterPro"/>
</dbReference>
<dbReference type="GO" id="GO:0030527">
    <property type="term" value="F:structural constituent of chromatin"/>
    <property type="evidence" value="ECO:0000318"/>
    <property type="project" value="GO_Central"/>
</dbReference>
<dbReference type="GO" id="GO:0031507">
    <property type="term" value="P:heterochromatin formation"/>
    <property type="evidence" value="ECO:0000318"/>
    <property type="project" value="GO_Central"/>
</dbReference>
<dbReference type="CDD" id="cd00074">
    <property type="entry name" value="HFD_H2A"/>
    <property type="match status" value="1"/>
</dbReference>
<dbReference type="FunFam" id="1.10.20.10:FF:000146">
    <property type="entry name" value="Histone H2A"/>
    <property type="match status" value="1"/>
</dbReference>
<dbReference type="Gene3D" id="1.10.20.10">
    <property type="entry name" value="Histone, subunit A"/>
    <property type="match status" value="1"/>
</dbReference>
<dbReference type="InterPro" id="IPR009072">
    <property type="entry name" value="Histone-fold"/>
</dbReference>
<dbReference type="InterPro" id="IPR002119">
    <property type="entry name" value="Histone_H2A"/>
</dbReference>
<dbReference type="InterPro" id="IPR007125">
    <property type="entry name" value="Histone_H2A/H2B/H3"/>
</dbReference>
<dbReference type="InterPro" id="IPR032458">
    <property type="entry name" value="Histone_H2A_CS"/>
</dbReference>
<dbReference type="PANTHER" id="PTHR23430">
    <property type="entry name" value="HISTONE H2A"/>
    <property type="match status" value="1"/>
</dbReference>
<dbReference type="Pfam" id="PF00125">
    <property type="entry name" value="Histone"/>
    <property type="match status" value="1"/>
</dbReference>
<dbReference type="PRINTS" id="PR00620">
    <property type="entry name" value="HISTONEH2A"/>
</dbReference>
<dbReference type="SMART" id="SM00414">
    <property type="entry name" value="H2A"/>
    <property type="match status" value="1"/>
</dbReference>
<dbReference type="SUPFAM" id="SSF47113">
    <property type="entry name" value="Histone-fold"/>
    <property type="match status" value="1"/>
</dbReference>
<dbReference type="PROSITE" id="PS00046">
    <property type="entry name" value="HISTONE_H2A"/>
    <property type="match status" value="1"/>
</dbReference>
<comment type="function">
    <text>Core component of nucleosome. Nucleosomes wrap and compact DNA into chromatin, limiting DNA accessibility to the cellular machineries which require DNA as a template. Histones thereby play a central role in transcription regulation, DNA repair, DNA replication and chromosomal stability. DNA accessibility is regulated via a complex set of post-translational modifications of histones, also called histone code, and nucleosome remodeling.</text>
</comment>
<comment type="subunit">
    <text>The nucleosome is a histone octamer containing two molecules each of H2A, H2B, H3 and H4 assembled in one H3-H4 heterotetramer and two H2A-H2B heterodimers. The octamer wraps approximately 147 bp of DNA.</text>
</comment>
<comment type="subcellular location">
    <subcellularLocation>
        <location>Nucleus</location>
    </subcellularLocation>
    <subcellularLocation>
        <location>Chromosome</location>
    </subcellularLocation>
</comment>
<comment type="PTM">
    <text evidence="1">Monoubiquitination in C-terminus gives a specific tag for epigenetic transcriptional repression.</text>
</comment>
<comment type="similarity">
    <text evidence="1">Belongs to the histone H2A family.</text>
</comment>
<name>H2A3_STRPU</name>
<proteinExistence type="evidence at protein level"/>
<keyword id="KW-0158">Chromosome</keyword>
<keyword id="KW-0238">DNA-binding</keyword>
<keyword id="KW-0544">Nucleosome core</keyword>
<keyword id="KW-0539">Nucleus</keyword>
<keyword id="KW-1185">Reference proteome</keyword>
<keyword id="KW-0832">Ubl conjugation</keyword>
<evidence type="ECO:0000305" key="1"/>
<accession>P09590</accession>
<reference key="1">
    <citation type="journal article" date="1986" name="Mol. Cell. Biol.">
        <title>Analysis of histone gene expression in adult tissues of the sea urchins Strongylocentrotus purpuratus and Lytechinus pictus: tissue-specific expression of sperm histone genes.</title>
        <authorList>
            <person name="Lieber T."/>
            <person name="Weisser K."/>
            <person name="Childs G."/>
        </authorList>
    </citation>
    <scope>NUCLEOTIDE SEQUENCE [MRNA]</scope>
    <source>
        <tissue>Testis</tissue>
    </source>
</reference>
<reference key="2">
    <citation type="journal article" date="1995" name="Dev. Genet.">
        <title>Embryonic regulation of histone ubiquitination in the sea urchin.</title>
        <authorList>
            <person name="Jasinskiene N."/>
            <person name="Jasinskas A."/>
            <person name="Langmore J.P."/>
        </authorList>
    </citation>
    <scope>UBIQUITINATION</scope>
</reference>
<organism>
    <name type="scientific">Strongylocentrotus purpuratus</name>
    <name type="common">Purple sea urchin</name>
    <dbReference type="NCBI Taxonomy" id="7668"/>
    <lineage>
        <taxon>Eukaryota</taxon>
        <taxon>Metazoa</taxon>
        <taxon>Echinodermata</taxon>
        <taxon>Eleutherozoa</taxon>
        <taxon>Echinozoa</taxon>
        <taxon>Echinoidea</taxon>
        <taxon>Euechinoidea</taxon>
        <taxon>Echinacea</taxon>
        <taxon>Camarodonta</taxon>
        <taxon>Echinidea</taxon>
        <taxon>Strongylocentrotidae</taxon>
        <taxon>Strongylocentrotus</taxon>
    </lineage>
</organism>
<sequence>KAKGKAKRRSSRAGLQFPVGRVHRFLRKGNYANRVGAGAPVYLAAVLEYLAAEILELAGNAARDNKKTRIIPRHLQLAIRNDEELNKL</sequence>
<protein>
    <recommendedName>
        <fullName>Histone H2A-beta, sperm</fullName>
    </recommendedName>
</protein>
<feature type="chain" id="PRO_0000055281" description="Histone H2A-beta, sperm">
    <location>
        <begin position="1" status="less than"/>
        <end position="88" status="greater than"/>
    </location>
</feature>
<feature type="non-terminal residue">
    <location>
        <position position="1"/>
    </location>
</feature>
<feature type="non-terminal residue">
    <location>
        <position position="88"/>
    </location>
</feature>